<evidence type="ECO:0000250" key="1"/>
<evidence type="ECO:0000305" key="2"/>
<feature type="chain" id="PRO_0000285331" description="Protein DML1">
    <location>
        <begin position="1"/>
        <end position="573"/>
    </location>
</feature>
<name>DML1_CANAL</name>
<proteinExistence type="inferred from homology"/>
<dbReference type="EMBL" id="CP017625">
    <property type="protein sequence ID" value="AOW28666.1"/>
    <property type="molecule type" value="Genomic_DNA"/>
</dbReference>
<dbReference type="RefSeq" id="XP_716110.1">
    <property type="nucleotide sequence ID" value="XM_711017.1"/>
</dbReference>
<dbReference type="FunCoup" id="Q5A2W2">
    <property type="interactions" value="75"/>
</dbReference>
<dbReference type="STRING" id="237561.Q5A2W2"/>
<dbReference type="EnsemblFungi" id="C3_06600C_A-T">
    <property type="protein sequence ID" value="C3_06600C_A-T-p1"/>
    <property type="gene ID" value="C3_06600C_A"/>
</dbReference>
<dbReference type="GeneID" id="3642280"/>
<dbReference type="KEGG" id="cal:CAALFM_C306600CA"/>
<dbReference type="CGD" id="CAL0000200048">
    <property type="gene designation" value="orf19.7449"/>
</dbReference>
<dbReference type="VEuPathDB" id="FungiDB:C3_06600C_A"/>
<dbReference type="eggNOG" id="KOG2530">
    <property type="taxonomic scope" value="Eukaryota"/>
</dbReference>
<dbReference type="HOGENOM" id="CLU_022511_2_1_1"/>
<dbReference type="InParanoid" id="Q5A2W2"/>
<dbReference type="OMA" id="DNGWGGF"/>
<dbReference type="OrthoDB" id="271881at2759"/>
<dbReference type="Proteomes" id="UP000000559">
    <property type="component" value="Chromosome 3"/>
</dbReference>
<dbReference type="GO" id="GO:0005737">
    <property type="term" value="C:cytoplasm"/>
    <property type="evidence" value="ECO:0000318"/>
    <property type="project" value="GO_Central"/>
</dbReference>
<dbReference type="GO" id="GO:0005739">
    <property type="term" value="C:mitochondrion"/>
    <property type="evidence" value="ECO:0000318"/>
    <property type="project" value="GO_Central"/>
</dbReference>
<dbReference type="GO" id="GO:0007005">
    <property type="term" value="P:mitochondrion organization"/>
    <property type="evidence" value="ECO:0000318"/>
    <property type="project" value="GO_Central"/>
</dbReference>
<dbReference type="Gene3D" id="3.40.50.1440">
    <property type="entry name" value="Tubulin/FtsZ, GTPase domain"/>
    <property type="match status" value="1"/>
</dbReference>
<dbReference type="InterPro" id="IPR049942">
    <property type="entry name" value="DML1/Misato"/>
</dbReference>
<dbReference type="InterPro" id="IPR029209">
    <property type="entry name" value="DML1/Misato_tubulin"/>
</dbReference>
<dbReference type="InterPro" id="IPR019605">
    <property type="entry name" value="Misato_II_tubulin-like"/>
</dbReference>
<dbReference type="InterPro" id="IPR036525">
    <property type="entry name" value="Tubulin/FtsZ_GTPase_sf"/>
</dbReference>
<dbReference type="PANTHER" id="PTHR13391">
    <property type="entry name" value="MITOCHONDRIAL DISTRIBUTION REGULATOR MISATO"/>
    <property type="match status" value="1"/>
</dbReference>
<dbReference type="PANTHER" id="PTHR13391:SF0">
    <property type="entry name" value="PROTEIN MISATO HOMOLOG 1"/>
    <property type="match status" value="1"/>
</dbReference>
<dbReference type="Pfam" id="PF10644">
    <property type="entry name" value="Misat_Tub_SegII"/>
    <property type="match status" value="1"/>
</dbReference>
<dbReference type="Pfam" id="PF14881">
    <property type="entry name" value="Tubulin_3"/>
    <property type="match status" value="1"/>
</dbReference>
<dbReference type="SUPFAM" id="SSF52490">
    <property type="entry name" value="Tubulin nucleotide-binding domain-like"/>
    <property type="match status" value="1"/>
</dbReference>
<sequence>MSEIITLSYGSICNNTVTHLYNTQESLISYTPSSKPNHDLQVFLTRFKSTSVSYSPRALIYDLRNGLGALNKYEYHETLPVDLNFSLLSTNTTAPAGAETGAGSSLESGYNLKKSRVEKNEYQQKLDQGVTDGSSLNVNNTKYWTDYNKLIYNPKSLTTVNNFVHNENNHESGYHYNFNSLKYDSFNIGQEEFKACNNGNGGYGYDDNDNNKSIENFRYFLEKTDRLQGLQLLTNLNDAWGGFTSEMLIDLIDEFFNNTSSDKQNLWIYGIMNSTKLSEKTQSIRTKLSFIKTLIELTKQSSLIFPMNLNNSKDESWHNNYSMLTDKYNSGSNWHQSSLYATFINSIWGLNNQLKNQISMTHLQNDIVKLNPNQKIINQIKIKQEKSGNGDKQNQLFGSDLNQFNLKDIVNLKDLSNLGKSSDTSATQREINLGISKNASTNTGNDAYHNFVQNRISSSTSQNEKMMKDKEQEQNGIINNYLNPYIDNIFQVETFPVDILKSSSNAINISTEFNVNDGLKSYLKPYIKLVSNIRNQHREYLDIIEDKEELLEDLNNISQEYSYGYESDDEDYE</sequence>
<keyword id="KW-0496">Mitochondrion</keyword>
<keyword id="KW-1185">Reference proteome</keyword>
<reference key="1">
    <citation type="journal article" date="2004" name="Proc. Natl. Acad. Sci. U.S.A.">
        <title>The diploid genome sequence of Candida albicans.</title>
        <authorList>
            <person name="Jones T."/>
            <person name="Federspiel N.A."/>
            <person name="Chibana H."/>
            <person name="Dungan J."/>
            <person name="Kalman S."/>
            <person name="Magee B.B."/>
            <person name="Newport G."/>
            <person name="Thorstenson Y.R."/>
            <person name="Agabian N."/>
            <person name="Magee P.T."/>
            <person name="Davis R.W."/>
            <person name="Scherer S."/>
        </authorList>
    </citation>
    <scope>NUCLEOTIDE SEQUENCE [LARGE SCALE GENOMIC DNA]</scope>
    <source>
        <strain>SC5314 / ATCC MYA-2876</strain>
    </source>
</reference>
<reference key="2">
    <citation type="journal article" date="2007" name="Genome Biol.">
        <title>Assembly of the Candida albicans genome into sixteen supercontigs aligned on the eight chromosomes.</title>
        <authorList>
            <person name="van het Hoog M."/>
            <person name="Rast T.J."/>
            <person name="Martchenko M."/>
            <person name="Grindle S."/>
            <person name="Dignard D."/>
            <person name="Hogues H."/>
            <person name="Cuomo C."/>
            <person name="Berriman M."/>
            <person name="Scherer S."/>
            <person name="Magee B.B."/>
            <person name="Whiteway M."/>
            <person name="Chibana H."/>
            <person name="Nantel A."/>
            <person name="Magee P.T."/>
        </authorList>
    </citation>
    <scope>GENOME REANNOTATION</scope>
    <source>
        <strain>SC5314 / ATCC MYA-2876</strain>
    </source>
</reference>
<reference key="3">
    <citation type="journal article" date="2013" name="Genome Biol.">
        <title>Assembly of a phased diploid Candida albicans genome facilitates allele-specific measurements and provides a simple model for repeat and indel structure.</title>
        <authorList>
            <person name="Muzzey D."/>
            <person name="Schwartz K."/>
            <person name="Weissman J.S."/>
            <person name="Sherlock G."/>
        </authorList>
    </citation>
    <scope>NUCLEOTIDE SEQUENCE [LARGE SCALE GENOMIC DNA]</scope>
    <scope>GENOME REANNOTATION</scope>
    <source>
        <strain>SC5314 / ATCC MYA-2876</strain>
    </source>
</reference>
<protein>
    <recommendedName>
        <fullName>Protein DML1</fullName>
    </recommendedName>
</protein>
<gene>
    <name type="primary">DML1</name>
    <name type="ordered locus">CAALFM_C306600CA</name>
    <name type="ORF">CaO19.7449</name>
</gene>
<accession>Q5A2W2</accession>
<accession>A0A1D8PKJ9</accession>
<comment type="function">
    <text evidence="1">Involved in the partitioning of the mitochondrial organelle and mitochondrial DNA (mtDNA) inheritance.</text>
</comment>
<comment type="subcellular location">
    <subcellularLocation>
        <location evidence="1">Mitochondrion</location>
    </subcellularLocation>
</comment>
<comment type="similarity">
    <text evidence="2">Belongs to the misato family.</text>
</comment>
<organism>
    <name type="scientific">Candida albicans (strain SC5314 / ATCC MYA-2876)</name>
    <name type="common">Yeast</name>
    <dbReference type="NCBI Taxonomy" id="237561"/>
    <lineage>
        <taxon>Eukaryota</taxon>
        <taxon>Fungi</taxon>
        <taxon>Dikarya</taxon>
        <taxon>Ascomycota</taxon>
        <taxon>Saccharomycotina</taxon>
        <taxon>Pichiomycetes</taxon>
        <taxon>Debaryomycetaceae</taxon>
        <taxon>Candida/Lodderomyces clade</taxon>
        <taxon>Candida</taxon>
    </lineage>
</organism>